<name>RS21_BRUA2</name>
<organism>
    <name type="scientific">Brucella abortus (strain 2308)</name>
    <dbReference type="NCBI Taxonomy" id="359391"/>
    <lineage>
        <taxon>Bacteria</taxon>
        <taxon>Pseudomonadati</taxon>
        <taxon>Pseudomonadota</taxon>
        <taxon>Alphaproteobacteria</taxon>
        <taxon>Hyphomicrobiales</taxon>
        <taxon>Brucellaceae</taxon>
        <taxon>Brucella/Ochrobactrum group</taxon>
        <taxon>Brucella</taxon>
    </lineage>
</organism>
<keyword id="KW-1185">Reference proteome</keyword>
<keyword id="KW-0687">Ribonucleoprotein</keyword>
<keyword id="KW-0689">Ribosomal protein</keyword>
<evidence type="ECO:0000255" key="1">
    <source>
        <dbReference type="HAMAP-Rule" id="MF_00358"/>
    </source>
</evidence>
<evidence type="ECO:0000305" key="2"/>
<comment type="similarity">
    <text evidence="1">Belongs to the bacterial ribosomal protein bS21 family.</text>
</comment>
<gene>
    <name evidence="1" type="primary">rpsU</name>
    <name type="ordered locus">BAB2_0269</name>
</gene>
<proteinExistence type="inferred from homology"/>
<dbReference type="EMBL" id="AM040265">
    <property type="protein sequence ID" value="CAJ12435.1"/>
    <property type="molecule type" value="Genomic_DNA"/>
</dbReference>
<dbReference type="RefSeq" id="WP_002965682.1">
    <property type="nucleotide sequence ID" value="NZ_KN046823.1"/>
</dbReference>
<dbReference type="SMR" id="Q2YIW0"/>
<dbReference type="STRING" id="359391.BAB2_0269"/>
<dbReference type="GeneID" id="97533017"/>
<dbReference type="KEGG" id="bmf:BAB2_0269"/>
<dbReference type="HOGENOM" id="CLU_159258_0_1_5"/>
<dbReference type="Proteomes" id="UP000002719">
    <property type="component" value="Chromosome II"/>
</dbReference>
<dbReference type="GO" id="GO:1990904">
    <property type="term" value="C:ribonucleoprotein complex"/>
    <property type="evidence" value="ECO:0007669"/>
    <property type="project" value="UniProtKB-KW"/>
</dbReference>
<dbReference type="GO" id="GO:0005840">
    <property type="term" value="C:ribosome"/>
    <property type="evidence" value="ECO:0007669"/>
    <property type="project" value="UniProtKB-KW"/>
</dbReference>
<dbReference type="GO" id="GO:0003735">
    <property type="term" value="F:structural constituent of ribosome"/>
    <property type="evidence" value="ECO:0007669"/>
    <property type="project" value="InterPro"/>
</dbReference>
<dbReference type="GO" id="GO:0006412">
    <property type="term" value="P:translation"/>
    <property type="evidence" value="ECO:0007669"/>
    <property type="project" value="UniProtKB-UniRule"/>
</dbReference>
<dbReference type="Gene3D" id="1.20.5.1150">
    <property type="entry name" value="Ribosomal protein S8"/>
    <property type="match status" value="1"/>
</dbReference>
<dbReference type="HAMAP" id="MF_00358">
    <property type="entry name" value="Ribosomal_bS21"/>
    <property type="match status" value="1"/>
</dbReference>
<dbReference type="InterPro" id="IPR001911">
    <property type="entry name" value="Ribosomal_bS21"/>
</dbReference>
<dbReference type="InterPro" id="IPR018278">
    <property type="entry name" value="Ribosomal_bS21_CS"/>
</dbReference>
<dbReference type="InterPro" id="IPR038380">
    <property type="entry name" value="Ribosomal_bS21_sf"/>
</dbReference>
<dbReference type="NCBIfam" id="TIGR00030">
    <property type="entry name" value="S21p"/>
    <property type="match status" value="1"/>
</dbReference>
<dbReference type="PANTHER" id="PTHR21109">
    <property type="entry name" value="MITOCHONDRIAL 28S RIBOSOMAL PROTEIN S21"/>
    <property type="match status" value="1"/>
</dbReference>
<dbReference type="PANTHER" id="PTHR21109:SF0">
    <property type="entry name" value="SMALL RIBOSOMAL SUBUNIT PROTEIN BS21M"/>
    <property type="match status" value="1"/>
</dbReference>
<dbReference type="Pfam" id="PF01165">
    <property type="entry name" value="Ribosomal_S21"/>
    <property type="match status" value="1"/>
</dbReference>
<dbReference type="PRINTS" id="PR00976">
    <property type="entry name" value="RIBOSOMALS21"/>
</dbReference>
<dbReference type="PROSITE" id="PS01181">
    <property type="entry name" value="RIBOSOMAL_S21"/>
    <property type="match status" value="1"/>
</dbReference>
<reference key="1">
    <citation type="journal article" date="2005" name="Infect. Immun.">
        <title>Whole-genome analyses of speciation events in pathogenic Brucellae.</title>
        <authorList>
            <person name="Chain P.S."/>
            <person name="Comerci D.J."/>
            <person name="Tolmasky M.E."/>
            <person name="Larimer F.W."/>
            <person name="Malfatti S.A."/>
            <person name="Vergez L.M."/>
            <person name="Aguero F."/>
            <person name="Land M.L."/>
            <person name="Ugalde R.A."/>
            <person name="Garcia E."/>
        </authorList>
    </citation>
    <scope>NUCLEOTIDE SEQUENCE [LARGE SCALE GENOMIC DNA]</scope>
    <source>
        <strain>2308</strain>
    </source>
</reference>
<sequence length="75" mass="8817">MQVLVRDNNVDQALRALKKKMQREGIFREMKMRGHYEKPSEKRAREKAEAVRRARKLARKRAQREGLIGGRTGAR</sequence>
<accession>Q2YIW0</accession>
<protein>
    <recommendedName>
        <fullName evidence="1">Small ribosomal subunit protein bS21</fullName>
    </recommendedName>
    <alternativeName>
        <fullName evidence="2">30S ribosomal protein S21</fullName>
    </alternativeName>
</protein>
<feature type="chain" id="PRO_0000266635" description="Small ribosomal subunit protein bS21">
    <location>
        <begin position="1"/>
        <end position="75"/>
    </location>
</feature>